<keyword id="KW-1003">Cell membrane</keyword>
<keyword id="KW-0963">Cytoplasm</keyword>
<keyword id="KW-0341">Growth regulation</keyword>
<keyword id="KW-0472">Membrane</keyword>
<keyword id="KW-0539">Nucleus</keyword>
<keyword id="KW-1185">Reference proteome</keyword>
<gene>
    <name type="primary">RIC7</name>
    <name type="ordered locus">At4g28556</name>
    <name type="ORF">F20O9</name>
</gene>
<dbReference type="EMBL" id="AL021749">
    <property type="status" value="NOT_ANNOTATED_CDS"/>
    <property type="molecule type" value="Genomic_DNA"/>
</dbReference>
<dbReference type="EMBL" id="CP002687">
    <property type="protein sequence ID" value="AEE85505.1"/>
    <property type="molecule type" value="Genomic_DNA"/>
</dbReference>
<dbReference type="EMBL" id="DQ487576">
    <property type="protein sequence ID" value="ABF59238.1"/>
    <property type="molecule type" value="mRNA"/>
</dbReference>
<dbReference type="RefSeq" id="NP_001031740.1">
    <property type="nucleotide sequence ID" value="NM_001036663.2"/>
</dbReference>
<dbReference type="FunCoup" id="Q1G3K8">
    <property type="interactions" value="74"/>
</dbReference>
<dbReference type="PaxDb" id="3702-AT4G28556.1"/>
<dbReference type="ProteomicsDB" id="236985"/>
<dbReference type="EnsemblPlants" id="AT4G28556.1">
    <property type="protein sequence ID" value="AT4G28556.1"/>
    <property type="gene ID" value="AT4G28556"/>
</dbReference>
<dbReference type="GeneID" id="3770548"/>
<dbReference type="Gramene" id="AT4G28556.1">
    <property type="protein sequence ID" value="AT4G28556.1"/>
    <property type="gene ID" value="AT4G28556"/>
</dbReference>
<dbReference type="KEGG" id="ath:AT4G28556"/>
<dbReference type="Araport" id="AT4G28556"/>
<dbReference type="TAIR" id="AT4G28556">
    <property type="gene designation" value="RIC7"/>
</dbReference>
<dbReference type="eggNOG" id="ENOG502S2ZY">
    <property type="taxonomic scope" value="Eukaryota"/>
</dbReference>
<dbReference type="HOGENOM" id="CLU_086489_2_0_1"/>
<dbReference type="InParanoid" id="Q1G3K8"/>
<dbReference type="OMA" id="ANIGWDG"/>
<dbReference type="PhylomeDB" id="Q1G3K8"/>
<dbReference type="PRO" id="PR:Q1G3K8"/>
<dbReference type="Proteomes" id="UP000006548">
    <property type="component" value="Chromosome 4"/>
</dbReference>
<dbReference type="ExpressionAtlas" id="Q1G3K8">
    <property type="expression patterns" value="baseline and differential"/>
</dbReference>
<dbReference type="GO" id="GO:0005737">
    <property type="term" value="C:cytoplasm"/>
    <property type="evidence" value="ECO:0007669"/>
    <property type="project" value="UniProtKB-SubCell"/>
</dbReference>
<dbReference type="GO" id="GO:0005634">
    <property type="term" value="C:nucleus"/>
    <property type="evidence" value="ECO:0000314"/>
    <property type="project" value="TAIR"/>
</dbReference>
<dbReference type="GO" id="GO:0005886">
    <property type="term" value="C:plasma membrane"/>
    <property type="evidence" value="ECO:0000314"/>
    <property type="project" value="TAIR"/>
</dbReference>
<dbReference type="GO" id="GO:0009416">
    <property type="term" value="P:response to light stimulus"/>
    <property type="evidence" value="ECO:0000314"/>
    <property type="project" value="TAIR"/>
</dbReference>
<dbReference type="CDD" id="cd00132">
    <property type="entry name" value="CRIB"/>
    <property type="match status" value="1"/>
</dbReference>
<dbReference type="FunFam" id="3.90.810.10:FF:000029">
    <property type="entry name" value="Elongation factor Ts, mitochondrial"/>
    <property type="match status" value="1"/>
</dbReference>
<dbReference type="Gene3D" id="3.90.810.10">
    <property type="entry name" value="CRIB domain"/>
    <property type="match status" value="1"/>
</dbReference>
<dbReference type="InterPro" id="IPR000095">
    <property type="entry name" value="CRIB_dom"/>
</dbReference>
<dbReference type="InterPro" id="IPR036936">
    <property type="entry name" value="CRIB_dom_sf"/>
</dbReference>
<dbReference type="PANTHER" id="PTHR46325:SF9">
    <property type="entry name" value="CRIB DOMAIN-CONTAINING PROTEIN RIC6-RELATED"/>
    <property type="match status" value="1"/>
</dbReference>
<dbReference type="PANTHER" id="PTHR46325">
    <property type="entry name" value="CRIB DOMAIN-CONTAINING PROTEIN RIC8"/>
    <property type="match status" value="1"/>
</dbReference>
<dbReference type="Pfam" id="PF00786">
    <property type="entry name" value="PBD"/>
    <property type="match status" value="1"/>
</dbReference>
<dbReference type="SMART" id="SM00285">
    <property type="entry name" value="PBD"/>
    <property type="match status" value="1"/>
</dbReference>
<dbReference type="PROSITE" id="PS50108">
    <property type="entry name" value="CRIB"/>
    <property type="match status" value="1"/>
</dbReference>
<reference key="1">
    <citation type="journal article" date="1999" name="Nature">
        <title>Sequence and analysis of chromosome 4 of the plant Arabidopsis thaliana.</title>
        <authorList>
            <person name="Mayer K.F.X."/>
            <person name="Schueller C."/>
            <person name="Wambutt R."/>
            <person name="Murphy G."/>
            <person name="Volckaert G."/>
            <person name="Pohl T."/>
            <person name="Duesterhoeft A."/>
            <person name="Stiekema W."/>
            <person name="Entian K.-D."/>
            <person name="Terryn N."/>
            <person name="Harris B."/>
            <person name="Ansorge W."/>
            <person name="Brandt P."/>
            <person name="Grivell L.A."/>
            <person name="Rieger M."/>
            <person name="Weichselgartner M."/>
            <person name="de Simone V."/>
            <person name="Obermaier B."/>
            <person name="Mache R."/>
            <person name="Mueller M."/>
            <person name="Kreis M."/>
            <person name="Delseny M."/>
            <person name="Puigdomenech P."/>
            <person name="Watson M."/>
            <person name="Schmidtheini T."/>
            <person name="Reichert B."/>
            <person name="Portetelle D."/>
            <person name="Perez-Alonso M."/>
            <person name="Boutry M."/>
            <person name="Bancroft I."/>
            <person name="Vos P."/>
            <person name="Hoheisel J."/>
            <person name="Zimmermann W."/>
            <person name="Wedler H."/>
            <person name="Ridley P."/>
            <person name="Langham S.-A."/>
            <person name="McCullagh B."/>
            <person name="Bilham L."/>
            <person name="Robben J."/>
            <person name="van der Schueren J."/>
            <person name="Grymonprez B."/>
            <person name="Chuang Y.-J."/>
            <person name="Vandenbussche F."/>
            <person name="Braeken M."/>
            <person name="Weltjens I."/>
            <person name="Voet M."/>
            <person name="Bastiaens I."/>
            <person name="Aert R."/>
            <person name="Defoor E."/>
            <person name="Weitzenegger T."/>
            <person name="Bothe G."/>
            <person name="Ramsperger U."/>
            <person name="Hilbert H."/>
            <person name="Braun M."/>
            <person name="Holzer E."/>
            <person name="Brandt A."/>
            <person name="Peters S."/>
            <person name="van Staveren M."/>
            <person name="Dirkse W."/>
            <person name="Mooijman P."/>
            <person name="Klein Lankhorst R."/>
            <person name="Rose M."/>
            <person name="Hauf J."/>
            <person name="Koetter P."/>
            <person name="Berneiser S."/>
            <person name="Hempel S."/>
            <person name="Feldpausch M."/>
            <person name="Lamberth S."/>
            <person name="Van den Daele H."/>
            <person name="De Keyser A."/>
            <person name="Buysshaert C."/>
            <person name="Gielen J."/>
            <person name="Villarroel R."/>
            <person name="De Clercq R."/>
            <person name="van Montagu M."/>
            <person name="Rogers J."/>
            <person name="Cronin A."/>
            <person name="Quail M.A."/>
            <person name="Bray-Allen S."/>
            <person name="Clark L."/>
            <person name="Doggett J."/>
            <person name="Hall S."/>
            <person name="Kay M."/>
            <person name="Lennard N."/>
            <person name="McLay K."/>
            <person name="Mayes R."/>
            <person name="Pettett A."/>
            <person name="Rajandream M.A."/>
            <person name="Lyne M."/>
            <person name="Benes V."/>
            <person name="Rechmann S."/>
            <person name="Borkova D."/>
            <person name="Bloecker H."/>
            <person name="Scharfe M."/>
            <person name="Grimm M."/>
            <person name="Loehnert T.-H."/>
            <person name="Dose S."/>
            <person name="de Haan M."/>
            <person name="Maarse A.C."/>
            <person name="Schaefer M."/>
            <person name="Mueller-Auer S."/>
            <person name="Gabel C."/>
            <person name="Fuchs M."/>
            <person name="Fartmann B."/>
            <person name="Granderath K."/>
            <person name="Dauner D."/>
            <person name="Herzl A."/>
            <person name="Neumann S."/>
            <person name="Argiriou A."/>
            <person name="Vitale D."/>
            <person name="Liguori R."/>
            <person name="Piravandi E."/>
            <person name="Massenet O."/>
            <person name="Quigley F."/>
            <person name="Clabauld G."/>
            <person name="Muendlein A."/>
            <person name="Felber R."/>
            <person name="Schnabl S."/>
            <person name="Hiller R."/>
            <person name="Schmidt W."/>
            <person name="Lecharny A."/>
            <person name="Aubourg S."/>
            <person name="Chefdor F."/>
            <person name="Cooke R."/>
            <person name="Berger C."/>
            <person name="Monfort A."/>
            <person name="Casacuberta E."/>
            <person name="Gibbons T."/>
            <person name="Weber N."/>
            <person name="Vandenbol M."/>
            <person name="Bargues M."/>
            <person name="Terol J."/>
            <person name="Torres A."/>
            <person name="Perez-Perez A."/>
            <person name="Purnelle B."/>
            <person name="Bent E."/>
            <person name="Johnson S."/>
            <person name="Tacon D."/>
            <person name="Jesse T."/>
            <person name="Heijnen L."/>
            <person name="Schwarz S."/>
            <person name="Scholler P."/>
            <person name="Heber S."/>
            <person name="Francs P."/>
            <person name="Bielke C."/>
            <person name="Frishman D."/>
            <person name="Haase D."/>
            <person name="Lemcke K."/>
            <person name="Mewes H.-W."/>
            <person name="Stocker S."/>
            <person name="Zaccaria P."/>
            <person name="Bevan M."/>
            <person name="Wilson R.K."/>
            <person name="de la Bastide M."/>
            <person name="Habermann K."/>
            <person name="Parnell L."/>
            <person name="Dedhia N."/>
            <person name="Gnoj L."/>
            <person name="Schutz K."/>
            <person name="Huang E."/>
            <person name="Spiegel L."/>
            <person name="Sekhon M."/>
            <person name="Murray J."/>
            <person name="Sheet P."/>
            <person name="Cordes M."/>
            <person name="Abu-Threideh J."/>
            <person name="Stoneking T."/>
            <person name="Kalicki J."/>
            <person name="Graves T."/>
            <person name="Harmon G."/>
            <person name="Edwards J."/>
            <person name="Latreille P."/>
            <person name="Courtney L."/>
            <person name="Cloud J."/>
            <person name="Abbott A."/>
            <person name="Scott K."/>
            <person name="Johnson D."/>
            <person name="Minx P."/>
            <person name="Bentley D."/>
            <person name="Fulton B."/>
            <person name="Miller N."/>
            <person name="Greco T."/>
            <person name="Kemp K."/>
            <person name="Kramer J."/>
            <person name="Fulton L."/>
            <person name="Mardis E."/>
            <person name="Dante M."/>
            <person name="Pepin K."/>
            <person name="Hillier L.W."/>
            <person name="Nelson J."/>
            <person name="Spieth J."/>
            <person name="Ryan E."/>
            <person name="Andrews S."/>
            <person name="Geisel C."/>
            <person name="Layman D."/>
            <person name="Du H."/>
            <person name="Ali J."/>
            <person name="Berghoff A."/>
            <person name="Jones K."/>
            <person name="Drone K."/>
            <person name="Cotton M."/>
            <person name="Joshu C."/>
            <person name="Antonoiu B."/>
            <person name="Zidanic M."/>
            <person name="Strong C."/>
            <person name="Sun H."/>
            <person name="Lamar B."/>
            <person name="Yordan C."/>
            <person name="Ma P."/>
            <person name="Zhong J."/>
            <person name="Preston R."/>
            <person name="Vil D."/>
            <person name="Shekher M."/>
            <person name="Matero A."/>
            <person name="Shah R."/>
            <person name="Swaby I.K."/>
            <person name="O'Shaughnessy A."/>
            <person name="Rodriguez M."/>
            <person name="Hoffman J."/>
            <person name="Till S."/>
            <person name="Granat S."/>
            <person name="Shohdy N."/>
            <person name="Hasegawa A."/>
            <person name="Hameed A."/>
            <person name="Lodhi M."/>
            <person name="Johnson A."/>
            <person name="Chen E."/>
            <person name="Marra M.A."/>
            <person name="Martienssen R."/>
            <person name="McCombie W.R."/>
        </authorList>
    </citation>
    <scope>NUCLEOTIDE SEQUENCE [LARGE SCALE GENOMIC DNA]</scope>
    <source>
        <strain>cv. Columbia</strain>
    </source>
</reference>
<reference key="2">
    <citation type="journal article" date="2017" name="Plant J.">
        <title>Araport11: a complete reannotation of the Arabidopsis thaliana reference genome.</title>
        <authorList>
            <person name="Cheng C.Y."/>
            <person name="Krishnakumar V."/>
            <person name="Chan A.P."/>
            <person name="Thibaud-Nissen F."/>
            <person name="Schobel S."/>
            <person name="Town C.D."/>
        </authorList>
    </citation>
    <scope>GENOME REANNOTATION</scope>
    <source>
        <strain>cv. Columbia</strain>
    </source>
</reference>
<reference key="3">
    <citation type="journal article" date="2006" name="Plant Biotechnol. J.">
        <title>Simultaneous high-throughput recombinational cloning of open reading frames in closed and open configurations.</title>
        <authorList>
            <person name="Underwood B.A."/>
            <person name="Vanderhaeghen R."/>
            <person name="Whitford R."/>
            <person name="Town C.D."/>
            <person name="Hilson P."/>
        </authorList>
    </citation>
    <scope>NUCLEOTIDE SEQUENCE [LARGE SCALE MRNA]</scope>
    <source>
        <strain>cv. Columbia</strain>
    </source>
</reference>
<reference key="4">
    <citation type="journal article" date="2001" name="Plant Cell">
        <title>A genome-wide analysis of Arabidopsis Rop-interactive CRIB motif-containing proteins that act as Rop GTPase targets.</title>
        <authorList>
            <person name="Wu G."/>
            <person name="Gu Y."/>
            <person name="Li S."/>
            <person name="Yang Z."/>
        </authorList>
    </citation>
    <scope>FUNCTION</scope>
    <scope>INTERACTION WITH ARAC11/ROP1</scope>
    <scope>SUBCELLULAR LOCATION</scope>
    <scope>TISSUE SPECIFICITY</scope>
    <scope>GENE FAMILY</scope>
    <scope>NOMENCLATURE</scope>
</reference>
<reference key="5">
    <citation type="journal article" date="2008" name="Plant Cell">
        <title>The Arabidopsis small G protein ROP2 is activated by light in guard cells and inhibits light-induced stomatal opening.</title>
        <authorList>
            <person name="Jeon B.W."/>
            <person name="Hwang J.U."/>
            <person name="Hwang Y."/>
            <person name="Song W.Y."/>
            <person name="Fu Y."/>
            <person name="Gu Y."/>
            <person name="Bao F."/>
            <person name="Cho D."/>
            <person name="Kwak J.M."/>
            <person name="Yang Z."/>
            <person name="Lee Y."/>
        </authorList>
    </citation>
    <scope>FUNCTION</scope>
    <scope>INTERACTION WITH ARAC4/ROP2</scope>
    <scope>SUBCELLULAR LOCATION</scope>
    <scope>TISSUE SPECIFICITY</scope>
</reference>
<organism>
    <name type="scientific">Arabidopsis thaliana</name>
    <name type="common">Mouse-ear cress</name>
    <dbReference type="NCBI Taxonomy" id="3702"/>
    <lineage>
        <taxon>Eukaryota</taxon>
        <taxon>Viridiplantae</taxon>
        <taxon>Streptophyta</taxon>
        <taxon>Embryophyta</taxon>
        <taxon>Tracheophyta</taxon>
        <taxon>Spermatophyta</taxon>
        <taxon>Magnoliopsida</taxon>
        <taxon>eudicotyledons</taxon>
        <taxon>Gunneridae</taxon>
        <taxon>Pentapetalae</taxon>
        <taxon>rosids</taxon>
        <taxon>malvids</taxon>
        <taxon>Brassicales</taxon>
        <taxon>Brassicaceae</taxon>
        <taxon>Camelineae</taxon>
        <taxon>Arabidopsis</taxon>
    </lineage>
</organism>
<evidence type="ECO:0000255" key="1">
    <source>
        <dbReference type="PROSITE-ProRule" id="PRU00057"/>
    </source>
</evidence>
<evidence type="ECO:0000256" key="2">
    <source>
        <dbReference type="SAM" id="MobiDB-lite"/>
    </source>
</evidence>
<evidence type="ECO:0000269" key="3">
    <source>
    </source>
</evidence>
<evidence type="ECO:0000269" key="4">
    <source>
    </source>
</evidence>
<evidence type="ECO:0000305" key="5"/>
<evidence type="ECO:0000305" key="6">
    <source>
    </source>
</evidence>
<accession>Q1G3K8</accession>
<comment type="function">
    <text evidence="3 4">Functions as a downstream effector of Rho-related GTP binding proteins of the 'Rho of Plants' (ROPs) family. Participates in the propagation of ROP GTPase signals in specific cellular responses. Functions as a downstream effector of active ARAC4/ROP2 GTPase which is involved in the prevention of excessive stomatal opening upon light stimulation. Is involved in pollen tube growth regulation through its interaction with ARAC11/ROP1.</text>
</comment>
<comment type="subunit">
    <text evidence="3 4">Interacts with ARAC4/ROP2 and ARAC11/ROP1.</text>
</comment>
<comment type="subcellular location">
    <subcellularLocation>
        <location evidence="4">Nucleus</location>
    </subcellularLocation>
    <subcellularLocation>
        <location evidence="3 4">Cytoplasm</location>
    </subcellularLocation>
    <subcellularLocation>
        <location evidence="3 4">Cell membrane</location>
        <topology evidence="5">Peripheral membrane protein</topology>
    </subcellularLocation>
    <text evidence="4">In guard cells in the dark localizes predominantly in the nucleus, but upon light irradiation, it is found at the plasma membrane and in the cytoplasm.</text>
</comment>
<comment type="tissue specificity">
    <text evidence="3 4">Expressed in roots, leaves, guard cells, stems, flowers, siliques and pollen.</text>
</comment>
<comment type="miscellaneous">
    <text evidence="6">Over-expression of RIC7 in tobacco germinating pollen reduces pollen tube elongation.</text>
</comment>
<sequence length="216" mass="23754">MQLGMSSTKMKSLLKGLRYISQVFAIEGEKEEEMQIGNPTDVKHVAHIGWDGPSDNATAPSWMNDFKSSPVMESIQGLGEDDSSVKCQSEFGGRTRDLPKLPKSTRKSSSEKGSPTKERSDKTKRRTSNKGTSSSRRTKDEDSTSSSRRTTKDEDSSLSQHSAGLPEVPKKSKRKKSKEAGNGGSSRSSRISEADYMSDTGSDRSMPQFEDDRNGF</sequence>
<proteinExistence type="evidence at protein level"/>
<protein>
    <recommendedName>
        <fullName>CRIB domain-containing protein RIC7</fullName>
    </recommendedName>
    <alternativeName>
        <fullName>ROP-interactive CRIB motif-containing protein 7</fullName>
    </alternativeName>
    <alternativeName>
        <fullName>Target of ROP protein RIC7</fullName>
    </alternativeName>
</protein>
<name>RIC7_ARATH</name>
<feature type="chain" id="PRO_0000422730" description="CRIB domain-containing protein RIC7">
    <location>
        <begin position="1"/>
        <end position="216"/>
    </location>
</feature>
<feature type="domain" description="CRIB" evidence="1">
    <location>
        <begin position="36"/>
        <end position="49"/>
    </location>
</feature>
<feature type="region of interest" description="Disordered" evidence="2">
    <location>
        <begin position="52"/>
        <end position="216"/>
    </location>
</feature>
<feature type="compositionally biased region" description="Basic and acidic residues" evidence="2">
    <location>
        <begin position="108"/>
        <end position="121"/>
    </location>
</feature>